<sequence length="202" mass="22230">MRLFVGLGNPGTKYQGNRHNIGFMVVDEIARRHGFAPWRRRFQGEASEGTLDRERVIVLKPATYMNNSGNAVQDAVQFFKLKEADVVVFHDEIELPPAKVRVKVGGGIAGHNGLRSISAHIGNDYRRVRLGVGHPGVKELVHAHVLNDFARSERSWVEALVDTVAENAALLVAAKDSAFQNKVHLAMQAKGFADNGGEDKQN</sequence>
<dbReference type="EC" id="3.1.1.29" evidence="1"/>
<dbReference type="EMBL" id="CP000115">
    <property type="protein sequence ID" value="ABA05764.1"/>
    <property type="molecule type" value="Genomic_DNA"/>
</dbReference>
<dbReference type="RefSeq" id="WP_011315715.1">
    <property type="nucleotide sequence ID" value="NC_007406.1"/>
</dbReference>
<dbReference type="SMR" id="Q3SPM7"/>
<dbReference type="STRING" id="323098.Nwi_2511"/>
<dbReference type="KEGG" id="nwi:Nwi_2511"/>
<dbReference type="eggNOG" id="COG0193">
    <property type="taxonomic scope" value="Bacteria"/>
</dbReference>
<dbReference type="HOGENOM" id="CLU_062456_1_0_5"/>
<dbReference type="OrthoDB" id="9800507at2"/>
<dbReference type="Proteomes" id="UP000002531">
    <property type="component" value="Chromosome"/>
</dbReference>
<dbReference type="GO" id="GO:0005737">
    <property type="term" value="C:cytoplasm"/>
    <property type="evidence" value="ECO:0007669"/>
    <property type="project" value="UniProtKB-SubCell"/>
</dbReference>
<dbReference type="GO" id="GO:0004045">
    <property type="term" value="F:peptidyl-tRNA hydrolase activity"/>
    <property type="evidence" value="ECO:0007669"/>
    <property type="project" value="UniProtKB-UniRule"/>
</dbReference>
<dbReference type="GO" id="GO:0000049">
    <property type="term" value="F:tRNA binding"/>
    <property type="evidence" value="ECO:0007669"/>
    <property type="project" value="UniProtKB-UniRule"/>
</dbReference>
<dbReference type="GO" id="GO:0006515">
    <property type="term" value="P:protein quality control for misfolded or incompletely synthesized proteins"/>
    <property type="evidence" value="ECO:0007669"/>
    <property type="project" value="UniProtKB-UniRule"/>
</dbReference>
<dbReference type="GO" id="GO:0072344">
    <property type="term" value="P:rescue of stalled ribosome"/>
    <property type="evidence" value="ECO:0007669"/>
    <property type="project" value="UniProtKB-UniRule"/>
</dbReference>
<dbReference type="CDD" id="cd00462">
    <property type="entry name" value="PTH"/>
    <property type="match status" value="1"/>
</dbReference>
<dbReference type="FunFam" id="3.40.50.1470:FF:000001">
    <property type="entry name" value="Peptidyl-tRNA hydrolase"/>
    <property type="match status" value="1"/>
</dbReference>
<dbReference type="Gene3D" id="3.40.50.1470">
    <property type="entry name" value="Peptidyl-tRNA hydrolase"/>
    <property type="match status" value="1"/>
</dbReference>
<dbReference type="HAMAP" id="MF_00083">
    <property type="entry name" value="Pept_tRNA_hydro_bact"/>
    <property type="match status" value="1"/>
</dbReference>
<dbReference type="InterPro" id="IPR001328">
    <property type="entry name" value="Pept_tRNA_hydro"/>
</dbReference>
<dbReference type="InterPro" id="IPR018171">
    <property type="entry name" value="Pept_tRNA_hydro_CS"/>
</dbReference>
<dbReference type="InterPro" id="IPR036416">
    <property type="entry name" value="Pept_tRNA_hydro_sf"/>
</dbReference>
<dbReference type="NCBIfam" id="TIGR00447">
    <property type="entry name" value="pth"/>
    <property type="match status" value="1"/>
</dbReference>
<dbReference type="PANTHER" id="PTHR17224">
    <property type="entry name" value="PEPTIDYL-TRNA HYDROLASE"/>
    <property type="match status" value="1"/>
</dbReference>
<dbReference type="PANTHER" id="PTHR17224:SF1">
    <property type="entry name" value="PEPTIDYL-TRNA HYDROLASE"/>
    <property type="match status" value="1"/>
</dbReference>
<dbReference type="Pfam" id="PF01195">
    <property type="entry name" value="Pept_tRNA_hydro"/>
    <property type="match status" value="1"/>
</dbReference>
<dbReference type="SUPFAM" id="SSF53178">
    <property type="entry name" value="Peptidyl-tRNA hydrolase-like"/>
    <property type="match status" value="1"/>
</dbReference>
<dbReference type="PROSITE" id="PS01195">
    <property type="entry name" value="PEPT_TRNA_HYDROL_1"/>
    <property type="match status" value="1"/>
</dbReference>
<dbReference type="PROSITE" id="PS01196">
    <property type="entry name" value="PEPT_TRNA_HYDROL_2"/>
    <property type="match status" value="1"/>
</dbReference>
<gene>
    <name evidence="1" type="primary">pth</name>
    <name type="ordered locus">Nwi_2511</name>
</gene>
<organism>
    <name type="scientific">Nitrobacter winogradskyi (strain ATCC 25391 / DSM 10237 / CIP 104748 / NCIMB 11846 / Nb-255)</name>
    <dbReference type="NCBI Taxonomy" id="323098"/>
    <lineage>
        <taxon>Bacteria</taxon>
        <taxon>Pseudomonadati</taxon>
        <taxon>Pseudomonadota</taxon>
        <taxon>Alphaproteobacteria</taxon>
        <taxon>Hyphomicrobiales</taxon>
        <taxon>Nitrobacteraceae</taxon>
        <taxon>Nitrobacter</taxon>
    </lineage>
</organism>
<evidence type="ECO:0000255" key="1">
    <source>
        <dbReference type="HAMAP-Rule" id="MF_00083"/>
    </source>
</evidence>
<feature type="chain" id="PRO_0000264067" description="Peptidyl-tRNA hydrolase">
    <location>
        <begin position="1"/>
        <end position="202"/>
    </location>
</feature>
<feature type="active site" description="Proton acceptor" evidence="1">
    <location>
        <position position="19"/>
    </location>
</feature>
<feature type="binding site" evidence="1">
    <location>
        <position position="14"/>
    </location>
    <ligand>
        <name>tRNA</name>
        <dbReference type="ChEBI" id="CHEBI:17843"/>
    </ligand>
</feature>
<feature type="binding site" evidence="1">
    <location>
        <position position="64"/>
    </location>
    <ligand>
        <name>tRNA</name>
        <dbReference type="ChEBI" id="CHEBI:17843"/>
    </ligand>
</feature>
<feature type="binding site" evidence="1">
    <location>
        <position position="66"/>
    </location>
    <ligand>
        <name>tRNA</name>
        <dbReference type="ChEBI" id="CHEBI:17843"/>
    </ligand>
</feature>
<feature type="binding site" evidence="1">
    <location>
        <position position="112"/>
    </location>
    <ligand>
        <name>tRNA</name>
        <dbReference type="ChEBI" id="CHEBI:17843"/>
    </ligand>
</feature>
<feature type="site" description="Discriminates between blocked and unblocked aminoacyl-tRNA" evidence="1">
    <location>
        <position position="9"/>
    </location>
</feature>
<feature type="site" description="Stabilizes the basic form of H active site to accept a proton" evidence="1">
    <location>
        <position position="91"/>
    </location>
</feature>
<reference key="1">
    <citation type="journal article" date="2006" name="Appl. Environ. Microbiol.">
        <title>Genome sequence of the chemolithoautotrophic nitrite-oxidizing bacterium Nitrobacter winogradskyi Nb-255.</title>
        <authorList>
            <person name="Starkenburg S.R."/>
            <person name="Chain P.S.G."/>
            <person name="Sayavedra-Soto L.A."/>
            <person name="Hauser L."/>
            <person name="Land M.L."/>
            <person name="Larimer F.W."/>
            <person name="Malfatti S.A."/>
            <person name="Klotz M.G."/>
            <person name="Bottomley P.J."/>
            <person name="Arp D.J."/>
            <person name="Hickey W.J."/>
        </authorList>
    </citation>
    <scope>NUCLEOTIDE SEQUENCE [LARGE SCALE GENOMIC DNA]</scope>
    <source>
        <strain>ATCC 25391 / DSM 10237 / CIP 104748 / NCIMB 11846 / Nb-255</strain>
    </source>
</reference>
<proteinExistence type="inferred from homology"/>
<protein>
    <recommendedName>
        <fullName evidence="1">Peptidyl-tRNA hydrolase</fullName>
        <shortName evidence="1">Pth</shortName>
        <ecNumber evidence="1">3.1.1.29</ecNumber>
    </recommendedName>
</protein>
<accession>Q3SPM7</accession>
<keyword id="KW-0963">Cytoplasm</keyword>
<keyword id="KW-0378">Hydrolase</keyword>
<keyword id="KW-1185">Reference proteome</keyword>
<keyword id="KW-0694">RNA-binding</keyword>
<keyword id="KW-0820">tRNA-binding</keyword>
<comment type="function">
    <text evidence="1">Hydrolyzes ribosome-free peptidyl-tRNAs (with 1 or more amino acids incorporated), which drop off the ribosome during protein synthesis, or as a result of ribosome stalling.</text>
</comment>
<comment type="function">
    <text evidence="1">Catalyzes the release of premature peptidyl moieties from peptidyl-tRNA molecules trapped in stalled 50S ribosomal subunits, and thus maintains levels of free tRNAs and 50S ribosomes.</text>
</comment>
<comment type="catalytic activity">
    <reaction evidence="1">
        <text>an N-acyl-L-alpha-aminoacyl-tRNA + H2O = an N-acyl-L-amino acid + a tRNA + H(+)</text>
        <dbReference type="Rhea" id="RHEA:54448"/>
        <dbReference type="Rhea" id="RHEA-COMP:10123"/>
        <dbReference type="Rhea" id="RHEA-COMP:13883"/>
        <dbReference type="ChEBI" id="CHEBI:15377"/>
        <dbReference type="ChEBI" id="CHEBI:15378"/>
        <dbReference type="ChEBI" id="CHEBI:59874"/>
        <dbReference type="ChEBI" id="CHEBI:78442"/>
        <dbReference type="ChEBI" id="CHEBI:138191"/>
        <dbReference type="EC" id="3.1.1.29"/>
    </reaction>
</comment>
<comment type="subunit">
    <text evidence="1">Monomer.</text>
</comment>
<comment type="subcellular location">
    <subcellularLocation>
        <location evidence="1">Cytoplasm</location>
    </subcellularLocation>
</comment>
<comment type="similarity">
    <text evidence="1">Belongs to the PTH family.</text>
</comment>
<name>PTH_NITWN</name>